<feature type="chain" id="PRO_0000068989" description="Adenosine receptor A1">
    <location>
        <begin position="1"/>
        <end position="326"/>
    </location>
</feature>
<feature type="topological domain" description="Extracellular" evidence="1">
    <location>
        <begin position="1"/>
        <end position="10"/>
    </location>
</feature>
<feature type="transmembrane region" description="Helical; Name=1" evidence="1">
    <location>
        <begin position="11"/>
        <end position="33"/>
    </location>
</feature>
<feature type="topological domain" description="Cytoplasmic" evidence="1">
    <location>
        <begin position="34"/>
        <end position="46"/>
    </location>
</feature>
<feature type="transmembrane region" description="Helical; Name=2" evidence="1">
    <location>
        <begin position="47"/>
        <end position="69"/>
    </location>
</feature>
<feature type="topological domain" description="Extracellular" evidence="1">
    <location>
        <begin position="70"/>
        <end position="80"/>
    </location>
</feature>
<feature type="transmembrane region" description="Helical; Name=3" evidence="1">
    <location>
        <begin position="81"/>
        <end position="102"/>
    </location>
</feature>
<feature type="topological domain" description="Cytoplasmic" evidence="1">
    <location>
        <begin position="103"/>
        <end position="123"/>
    </location>
</feature>
<feature type="transmembrane region" description="Helical; Name=4" evidence="1">
    <location>
        <begin position="124"/>
        <end position="146"/>
    </location>
</feature>
<feature type="topological domain" description="Extracellular" evidence="1">
    <location>
        <begin position="147"/>
        <end position="176"/>
    </location>
</feature>
<feature type="transmembrane region" description="Helical; Name=5" evidence="1">
    <location>
        <begin position="177"/>
        <end position="201"/>
    </location>
</feature>
<feature type="topological domain" description="Cytoplasmic" evidence="1">
    <location>
        <begin position="202"/>
        <end position="235"/>
    </location>
</feature>
<feature type="transmembrane region" description="Helical; Name=6" evidence="1">
    <location>
        <begin position="236"/>
        <end position="259"/>
    </location>
</feature>
<feature type="topological domain" description="Extracellular" evidence="1">
    <location>
        <begin position="260"/>
        <end position="267"/>
    </location>
</feature>
<feature type="transmembrane region" description="Helical; Name=7" evidence="1">
    <location>
        <begin position="268"/>
        <end position="292"/>
    </location>
</feature>
<feature type="topological domain" description="Cytoplasmic" evidence="1">
    <location>
        <begin position="293"/>
        <end position="326"/>
    </location>
</feature>
<feature type="lipid moiety-binding region" description="S-palmitoyl cysteine" evidence="1">
    <location>
        <position position="309"/>
    </location>
</feature>
<feature type="glycosylation site" description="N-linked (GlcNAc...) asparagine" evidence="1">
    <location>
        <position position="159"/>
    </location>
</feature>
<feature type="disulfide bond" evidence="2">
    <location>
        <begin position="80"/>
        <end position="169"/>
    </location>
</feature>
<proteinExistence type="evidence at transcript level"/>
<evidence type="ECO:0000255" key="1"/>
<evidence type="ECO:0000255" key="2">
    <source>
        <dbReference type="PROSITE-ProRule" id="PRU00521"/>
    </source>
</evidence>
<evidence type="ECO:0000269" key="3">
    <source>
    </source>
</evidence>
<reference key="1">
    <citation type="journal article" date="1989" name="Science">
        <title>Selective amplification and cloning of four new members of the G protein-coupled receptor family.</title>
        <authorList>
            <person name="Libert F."/>
            <person name="Parmentier M."/>
            <person name="Lefort A."/>
            <person name="Dinsart C."/>
            <person name="van Sande J."/>
            <person name="Maenhaut C."/>
            <person name="Simons M.-J."/>
            <person name="Dumont J.E."/>
            <person name="Vassart G."/>
        </authorList>
    </citation>
    <scope>NUCLEOTIDE SEQUENCE [MRNA]</scope>
    <source>
        <tissue>Thyroid</tissue>
    </source>
</reference>
<reference key="2">
    <citation type="journal article" date="1990" name="Nucleic Acids Res.">
        <title>Complete nucleotide sequence of a putative G protein coupled receptor: RDC7.</title>
        <authorList>
            <person name="Libert F."/>
            <person name="Parmentier M."/>
            <person name="Lefort A."/>
            <person name="Dumont J.E."/>
            <person name="Vassart G."/>
        </authorList>
    </citation>
    <scope>NUCLEOTIDE SEQUENCE [MRNA]</scope>
    <source>
        <tissue>Thyroid</tissue>
    </source>
</reference>
<reference key="3">
    <citation type="journal article" date="1991" name="EMBO J.">
        <title>The orphan receptor cDNA RDC7 encodes an A1 adenosine receptor.</title>
        <authorList>
            <person name="Libert F."/>
            <person name="Schiffmann S.N."/>
            <person name="Lefort A."/>
            <person name="Parmentier M."/>
            <person name="Gerard C."/>
            <person name="Dumont J.E."/>
            <person name="Vanderhaeghen J.-J."/>
            <person name="Vassart G."/>
        </authorList>
    </citation>
    <scope>FUNCTION</scope>
</reference>
<keyword id="KW-1003">Cell membrane</keyword>
<keyword id="KW-1015">Disulfide bond</keyword>
<keyword id="KW-0297">G-protein coupled receptor</keyword>
<keyword id="KW-0325">Glycoprotein</keyword>
<keyword id="KW-0449">Lipoprotein</keyword>
<keyword id="KW-0472">Membrane</keyword>
<keyword id="KW-0564">Palmitate</keyword>
<keyword id="KW-0675">Receptor</keyword>
<keyword id="KW-1185">Reference proteome</keyword>
<keyword id="KW-0807">Transducer</keyword>
<keyword id="KW-0812">Transmembrane</keyword>
<keyword id="KW-1133">Transmembrane helix</keyword>
<gene>
    <name type="primary">ADORA1</name>
    <name type="synonym">RDC7</name>
</gene>
<comment type="function">
    <text evidence="3">Receptor for adenosine. The activity of this receptor is mediated by G proteins which inhibit adenylyl cyclase.</text>
</comment>
<comment type="subcellular location">
    <subcellularLocation>
        <location>Cell membrane</location>
        <topology>Multi-pass membrane protein</topology>
    </subcellularLocation>
</comment>
<comment type="similarity">
    <text evidence="2">Belongs to the G-protein coupled receptor 1 family.</text>
</comment>
<protein>
    <recommendedName>
        <fullName>Adenosine receptor A1</fullName>
    </recommendedName>
</protein>
<sequence length="326" mass="36400">MPPAISAFQAAYIGIEVLIALVSVPGNVLVIWAVKVNQALRDATFCFIVSLAVADVAVGALVIPLAILINIGPRTYFHTCLMVACPVLILTQSSILALLAIAVDRYLRVKIPLRYKTVVTPRRAAVAIAGCWILSFVVGLTPLFGWNRLGEAQRAWAANGSGGEPVIKCEFEKVISMEYMVYFNFFVWVLPPLLLMVLIYLEVFYLIRRQLGKKVSASSGDPQKYYGKELKIAKSLALILFLFALSWLPLHILNCITLFCPSCRKPSILMYIAIFLTHGNSAMNPIVYAFRIQKFRVTFLKIWNDHFRCQPTPPVDEDPPEEAPHD</sequence>
<accession>P11616</accession>
<name>AA1R_CANLF</name>
<dbReference type="EMBL" id="X14051">
    <property type="protein sequence ID" value="CAA32209.1"/>
    <property type="molecule type" value="mRNA"/>
</dbReference>
<dbReference type="PIR" id="C30341">
    <property type="entry name" value="C30341"/>
</dbReference>
<dbReference type="RefSeq" id="NP_001003279.1">
    <property type="nucleotide sequence ID" value="NM_001003279.1"/>
</dbReference>
<dbReference type="RefSeq" id="XP_005622211.1">
    <property type="nucleotide sequence ID" value="XM_005622154.2"/>
</dbReference>
<dbReference type="RefSeq" id="XP_005622212.1">
    <property type="nucleotide sequence ID" value="XM_005622155.2"/>
</dbReference>
<dbReference type="RefSeq" id="XP_038526420.1">
    <property type="nucleotide sequence ID" value="XM_038670492.1"/>
</dbReference>
<dbReference type="RefSeq" id="XP_038526421.1">
    <property type="nucleotide sequence ID" value="XM_038670493.1"/>
</dbReference>
<dbReference type="SMR" id="P11616"/>
<dbReference type="FunCoup" id="P11616">
    <property type="interactions" value="180"/>
</dbReference>
<dbReference type="STRING" id="9615.ENSCAFP00000015121"/>
<dbReference type="GlyCosmos" id="P11616">
    <property type="glycosylation" value="1 site, No reported glycans"/>
</dbReference>
<dbReference type="PaxDb" id="9612-ENSCAFP00000015121"/>
<dbReference type="Ensembl" id="ENSCAFT00000016346.5">
    <property type="protein sequence ID" value="ENSCAFP00000015121.3"/>
    <property type="gene ID" value="ENSCAFG00000010298.5"/>
</dbReference>
<dbReference type="Ensembl" id="ENSCAFT00030005877.1">
    <property type="protein sequence ID" value="ENSCAFP00030005209.1"/>
    <property type="gene ID" value="ENSCAFG00030003141.1"/>
</dbReference>
<dbReference type="Ensembl" id="ENSCAFT00040004537.1">
    <property type="protein sequence ID" value="ENSCAFP00040003897.1"/>
    <property type="gene ID" value="ENSCAFG00040002391.1"/>
</dbReference>
<dbReference type="Ensembl" id="ENSCAFT00845025394.1">
    <property type="protein sequence ID" value="ENSCAFP00845019987.1"/>
    <property type="gene ID" value="ENSCAFG00845014197.1"/>
</dbReference>
<dbReference type="GeneID" id="403961"/>
<dbReference type="KEGG" id="cfa:403961"/>
<dbReference type="CTD" id="134"/>
<dbReference type="VEuPathDB" id="HostDB:ENSCAFG00845014197"/>
<dbReference type="VGNC" id="VGNC:37665">
    <property type="gene designation" value="ADORA1"/>
</dbReference>
<dbReference type="eggNOG" id="KOG3656">
    <property type="taxonomic scope" value="Eukaryota"/>
</dbReference>
<dbReference type="GeneTree" id="ENSGT01030000234555"/>
<dbReference type="HOGENOM" id="CLU_009579_11_5_1"/>
<dbReference type="InParanoid" id="P11616"/>
<dbReference type="OMA" id="FCCKDTP"/>
<dbReference type="OrthoDB" id="5984709at2759"/>
<dbReference type="TreeFam" id="TF325296"/>
<dbReference type="Reactome" id="R-CFA-417973">
    <property type="pathway name" value="Adenosine P1 receptors"/>
</dbReference>
<dbReference type="Reactome" id="R-CFA-418594">
    <property type="pathway name" value="G alpha (i) signalling events"/>
</dbReference>
<dbReference type="Proteomes" id="UP000002254">
    <property type="component" value="Chromosome 7"/>
</dbReference>
<dbReference type="Proteomes" id="UP000694429">
    <property type="component" value="Chromosome 7"/>
</dbReference>
<dbReference type="Proteomes" id="UP000694542">
    <property type="component" value="Chromosome 7"/>
</dbReference>
<dbReference type="Proteomes" id="UP000805418">
    <property type="component" value="Chromosome 7"/>
</dbReference>
<dbReference type="Bgee" id="ENSCAFG00000010298">
    <property type="expression patterns" value="Expressed in temporal lobe and 34 other cell types or tissues"/>
</dbReference>
<dbReference type="GO" id="GO:0005929">
    <property type="term" value="C:cilium"/>
    <property type="evidence" value="ECO:0007669"/>
    <property type="project" value="Ensembl"/>
</dbReference>
<dbReference type="GO" id="GO:0030425">
    <property type="term" value="C:dendrite"/>
    <property type="evidence" value="ECO:0000318"/>
    <property type="project" value="GO_Central"/>
</dbReference>
<dbReference type="GO" id="GO:0043197">
    <property type="term" value="C:dendritic spine"/>
    <property type="evidence" value="ECO:0007669"/>
    <property type="project" value="Ensembl"/>
</dbReference>
<dbReference type="GO" id="GO:0005886">
    <property type="term" value="C:plasma membrane"/>
    <property type="evidence" value="ECO:0000318"/>
    <property type="project" value="GO_Central"/>
</dbReference>
<dbReference type="GO" id="GO:0045202">
    <property type="term" value="C:synapse"/>
    <property type="evidence" value="ECO:0000318"/>
    <property type="project" value="GO_Central"/>
</dbReference>
<dbReference type="GO" id="GO:0001609">
    <property type="term" value="F:G protein-coupled adenosine receptor activity"/>
    <property type="evidence" value="ECO:0000318"/>
    <property type="project" value="GO_Central"/>
</dbReference>
<dbReference type="GO" id="GO:0060079">
    <property type="term" value="P:excitatory postsynaptic potential"/>
    <property type="evidence" value="ECO:0007669"/>
    <property type="project" value="Ensembl"/>
</dbReference>
<dbReference type="GO" id="GO:0007186">
    <property type="term" value="P:G protein-coupled receptor signaling pathway"/>
    <property type="evidence" value="ECO:0000318"/>
    <property type="project" value="GO_Central"/>
</dbReference>
<dbReference type="GO" id="GO:0050900">
    <property type="term" value="P:leukocyte migration"/>
    <property type="evidence" value="ECO:0007669"/>
    <property type="project" value="Ensembl"/>
</dbReference>
<dbReference type="GO" id="GO:0060292">
    <property type="term" value="P:long-term synaptic depression"/>
    <property type="evidence" value="ECO:0007669"/>
    <property type="project" value="Ensembl"/>
</dbReference>
<dbReference type="GO" id="GO:0070254">
    <property type="term" value="P:mucus secretion"/>
    <property type="evidence" value="ECO:0007669"/>
    <property type="project" value="Ensembl"/>
</dbReference>
<dbReference type="GO" id="GO:0050728">
    <property type="term" value="P:negative regulation of inflammatory response"/>
    <property type="evidence" value="ECO:0007669"/>
    <property type="project" value="Ensembl"/>
</dbReference>
<dbReference type="GO" id="GO:0002686">
    <property type="term" value="P:negative regulation of leukocyte migration"/>
    <property type="evidence" value="ECO:0007669"/>
    <property type="project" value="Ensembl"/>
</dbReference>
<dbReference type="GO" id="GO:1900453">
    <property type="term" value="P:negative regulation of long-term synaptic depression"/>
    <property type="evidence" value="ECO:0007669"/>
    <property type="project" value="Ensembl"/>
</dbReference>
<dbReference type="GO" id="GO:0070256">
    <property type="term" value="P:negative regulation of mucus secretion"/>
    <property type="evidence" value="ECO:0007669"/>
    <property type="project" value="Ensembl"/>
</dbReference>
<dbReference type="GO" id="GO:0003093">
    <property type="term" value="P:regulation of glomerular filtration"/>
    <property type="evidence" value="ECO:0007669"/>
    <property type="project" value="Ensembl"/>
</dbReference>
<dbReference type="GO" id="GO:0051930">
    <property type="term" value="P:regulation of sensory perception of pain"/>
    <property type="evidence" value="ECO:0007669"/>
    <property type="project" value="Ensembl"/>
</dbReference>
<dbReference type="GO" id="GO:0014074">
    <property type="term" value="P:response to purine-containing compound"/>
    <property type="evidence" value="ECO:0007669"/>
    <property type="project" value="Ensembl"/>
</dbReference>
<dbReference type="CDD" id="cd15071">
    <property type="entry name" value="7tmA_Adenosine_R_A1"/>
    <property type="match status" value="1"/>
</dbReference>
<dbReference type="FunFam" id="1.20.1070.10:FF:000061">
    <property type="entry name" value="Adenosine receptor A2"/>
    <property type="match status" value="1"/>
</dbReference>
<dbReference type="Gene3D" id="1.20.1070.10">
    <property type="entry name" value="Rhodopsin 7-helix transmembrane proteins"/>
    <property type="match status" value="1"/>
</dbReference>
<dbReference type="InterPro" id="IPR001068">
    <property type="entry name" value="Adeno_A1_rcpt"/>
</dbReference>
<dbReference type="InterPro" id="IPR001634">
    <property type="entry name" value="Adenosn_rcpt"/>
</dbReference>
<dbReference type="InterPro" id="IPR000276">
    <property type="entry name" value="GPCR_Rhodpsn"/>
</dbReference>
<dbReference type="InterPro" id="IPR017452">
    <property type="entry name" value="GPCR_Rhodpsn_7TM"/>
</dbReference>
<dbReference type="PANTHER" id="PTHR24246:SF1">
    <property type="entry name" value="ADENOSINE RECEPTOR A1"/>
    <property type="match status" value="1"/>
</dbReference>
<dbReference type="PANTHER" id="PTHR24246">
    <property type="entry name" value="OLFACTORY RECEPTOR AND ADENOSINE RECEPTOR"/>
    <property type="match status" value="1"/>
</dbReference>
<dbReference type="Pfam" id="PF00001">
    <property type="entry name" value="7tm_1"/>
    <property type="match status" value="1"/>
</dbReference>
<dbReference type="PRINTS" id="PR00552">
    <property type="entry name" value="ADENOSINEA1R"/>
</dbReference>
<dbReference type="PRINTS" id="PR00424">
    <property type="entry name" value="ADENOSINER"/>
</dbReference>
<dbReference type="PRINTS" id="PR00237">
    <property type="entry name" value="GPCRRHODOPSN"/>
</dbReference>
<dbReference type="SMART" id="SM01381">
    <property type="entry name" value="7TM_GPCR_Srsx"/>
    <property type="match status" value="1"/>
</dbReference>
<dbReference type="SUPFAM" id="SSF81321">
    <property type="entry name" value="Family A G protein-coupled receptor-like"/>
    <property type="match status" value="1"/>
</dbReference>
<dbReference type="PROSITE" id="PS00237">
    <property type="entry name" value="G_PROTEIN_RECEP_F1_1"/>
    <property type="match status" value="1"/>
</dbReference>
<dbReference type="PROSITE" id="PS50262">
    <property type="entry name" value="G_PROTEIN_RECEP_F1_2"/>
    <property type="match status" value="1"/>
</dbReference>
<organism>
    <name type="scientific">Canis lupus familiaris</name>
    <name type="common">Dog</name>
    <name type="synonym">Canis familiaris</name>
    <dbReference type="NCBI Taxonomy" id="9615"/>
    <lineage>
        <taxon>Eukaryota</taxon>
        <taxon>Metazoa</taxon>
        <taxon>Chordata</taxon>
        <taxon>Craniata</taxon>
        <taxon>Vertebrata</taxon>
        <taxon>Euteleostomi</taxon>
        <taxon>Mammalia</taxon>
        <taxon>Eutheria</taxon>
        <taxon>Laurasiatheria</taxon>
        <taxon>Carnivora</taxon>
        <taxon>Caniformia</taxon>
        <taxon>Canidae</taxon>
        <taxon>Canis</taxon>
    </lineage>
</organism>